<feature type="chain" id="PRO_0000200138" description="Homeobox protein Hox-B6a">
    <location>
        <begin position="1"/>
        <end position="228"/>
    </location>
</feature>
<feature type="DNA-binding region" description="Homeobox" evidence="1">
    <location>
        <begin position="150"/>
        <end position="209"/>
    </location>
</feature>
<feature type="short sequence motif" description="Antp-type hexapeptide">
    <location>
        <begin position="132"/>
        <end position="137"/>
    </location>
</feature>
<feature type="sequence conflict" description="In Ref. 3; CAD59113." evidence="3" ref="3">
    <original>L</original>
    <variation>V</variation>
    <location>
        <position position="6"/>
    </location>
</feature>
<dbReference type="EMBL" id="X17267">
    <property type="protein sequence ID" value="CAA35171.1"/>
    <property type="molecule type" value="Genomic_DNA"/>
</dbReference>
<dbReference type="EMBL" id="X68248">
    <property type="protein sequence ID" value="CAA48319.1"/>
    <property type="molecule type" value="Genomic_DNA"/>
</dbReference>
<dbReference type="EMBL" id="AL645782">
    <property type="protein sequence ID" value="CAD59113.1"/>
    <property type="molecule type" value="Genomic_DNA"/>
</dbReference>
<dbReference type="EMBL" id="DQ060541">
    <property type="protein sequence ID" value="AAY67919.1"/>
    <property type="molecule type" value="mRNA"/>
</dbReference>
<dbReference type="PIR" id="S32563">
    <property type="entry name" value="S32563"/>
</dbReference>
<dbReference type="RefSeq" id="NP_571194.1">
    <property type="nucleotide sequence ID" value="NM_131119.1"/>
</dbReference>
<dbReference type="BMRB" id="P15861"/>
<dbReference type="SMR" id="P15861"/>
<dbReference type="FunCoup" id="P15861">
    <property type="interactions" value="563"/>
</dbReference>
<dbReference type="STRING" id="7955.ENSDARP00000002263"/>
<dbReference type="PaxDb" id="7955-ENSDARP00000002263"/>
<dbReference type="GeneID" id="30341"/>
<dbReference type="KEGG" id="dre:30341"/>
<dbReference type="AGR" id="ZFIN:ZDB-GENE-990415-106"/>
<dbReference type="CTD" id="30341"/>
<dbReference type="ZFIN" id="ZDB-GENE-990415-106">
    <property type="gene designation" value="hoxb6a"/>
</dbReference>
<dbReference type="eggNOG" id="KOG0489">
    <property type="taxonomic scope" value="Eukaryota"/>
</dbReference>
<dbReference type="InParanoid" id="P15861"/>
<dbReference type="OrthoDB" id="6159439at2759"/>
<dbReference type="PhylomeDB" id="P15861"/>
<dbReference type="PRO" id="PR:P15861"/>
<dbReference type="Proteomes" id="UP000000437">
    <property type="component" value="Chromosome 3"/>
</dbReference>
<dbReference type="GO" id="GO:0005634">
    <property type="term" value="C:nucleus"/>
    <property type="evidence" value="ECO:0000318"/>
    <property type="project" value="GO_Central"/>
</dbReference>
<dbReference type="GO" id="GO:0000981">
    <property type="term" value="F:DNA-binding transcription factor activity, RNA polymerase II-specific"/>
    <property type="evidence" value="ECO:0000318"/>
    <property type="project" value="GO_Central"/>
</dbReference>
<dbReference type="GO" id="GO:0000978">
    <property type="term" value="F:RNA polymerase II cis-regulatory region sequence-specific DNA binding"/>
    <property type="evidence" value="ECO:0000318"/>
    <property type="project" value="GO_Central"/>
</dbReference>
<dbReference type="GO" id="GO:0009952">
    <property type="term" value="P:anterior/posterior pattern specification"/>
    <property type="evidence" value="ECO:0000318"/>
    <property type="project" value="GO_Central"/>
</dbReference>
<dbReference type="GO" id="GO:0006357">
    <property type="term" value="P:regulation of transcription by RNA polymerase II"/>
    <property type="evidence" value="ECO:0000318"/>
    <property type="project" value="GO_Central"/>
</dbReference>
<dbReference type="CDD" id="cd00086">
    <property type="entry name" value="homeodomain"/>
    <property type="match status" value="1"/>
</dbReference>
<dbReference type="FunFam" id="1.10.10.60:FF:000017">
    <property type="entry name" value="Homeobox protein antennapedia"/>
    <property type="match status" value="1"/>
</dbReference>
<dbReference type="Gene3D" id="1.10.10.60">
    <property type="entry name" value="Homeodomain-like"/>
    <property type="match status" value="1"/>
</dbReference>
<dbReference type="InterPro" id="IPR050296">
    <property type="entry name" value="Antp_homeobox"/>
</dbReference>
<dbReference type="InterPro" id="IPR001356">
    <property type="entry name" value="HD"/>
</dbReference>
<dbReference type="InterPro" id="IPR020479">
    <property type="entry name" value="HD_metazoa"/>
</dbReference>
<dbReference type="InterPro" id="IPR017995">
    <property type="entry name" value="Homeobox_antennapedia"/>
</dbReference>
<dbReference type="InterPro" id="IPR001827">
    <property type="entry name" value="Homeobox_Antennapedia_CS"/>
</dbReference>
<dbReference type="InterPro" id="IPR017970">
    <property type="entry name" value="Homeobox_CS"/>
</dbReference>
<dbReference type="InterPro" id="IPR009057">
    <property type="entry name" value="Homeodomain-like_sf"/>
</dbReference>
<dbReference type="PANTHER" id="PTHR45659">
    <property type="entry name" value="HOMEOBOX PROTEIN HOX"/>
    <property type="match status" value="1"/>
</dbReference>
<dbReference type="PANTHER" id="PTHR45659:SF9">
    <property type="entry name" value="HOMEOBOX PROTEIN HOX-B6"/>
    <property type="match status" value="1"/>
</dbReference>
<dbReference type="Pfam" id="PF00046">
    <property type="entry name" value="Homeodomain"/>
    <property type="match status" value="1"/>
</dbReference>
<dbReference type="PRINTS" id="PR00025">
    <property type="entry name" value="ANTENNAPEDIA"/>
</dbReference>
<dbReference type="PRINTS" id="PR00024">
    <property type="entry name" value="HOMEOBOX"/>
</dbReference>
<dbReference type="SMART" id="SM00389">
    <property type="entry name" value="HOX"/>
    <property type="match status" value="1"/>
</dbReference>
<dbReference type="SUPFAM" id="SSF46689">
    <property type="entry name" value="Homeodomain-like"/>
    <property type="match status" value="1"/>
</dbReference>
<dbReference type="PROSITE" id="PS00032">
    <property type="entry name" value="ANTENNAPEDIA"/>
    <property type="match status" value="1"/>
</dbReference>
<dbReference type="PROSITE" id="PS00027">
    <property type="entry name" value="HOMEOBOX_1"/>
    <property type="match status" value="1"/>
</dbReference>
<dbReference type="PROSITE" id="PS50071">
    <property type="entry name" value="HOMEOBOX_2"/>
    <property type="match status" value="1"/>
</dbReference>
<keyword id="KW-0217">Developmental protein</keyword>
<keyword id="KW-0238">DNA-binding</keyword>
<keyword id="KW-0371">Homeobox</keyword>
<keyword id="KW-0539">Nucleus</keyword>
<keyword id="KW-1185">Reference proteome</keyword>
<keyword id="KW-0804">Transcription</keyword>
<keyword id="KW-0805">Transcription regulation</keyword>
<gene>
    <name type="primary">hoxb6a</name>
    <name type="synonym">hox-b6</name>
    <name type="synonym">hoxb6</name>
    <name type="synonym">zf22</name>
</gene>
<evidence type="ECO:0000255" key="1">
    <source>
        <dbReference type="PROSITE-ProRule" id="PRU00108"/>
    </source>
</evidence>
<evidence type="ECO:0000269" key="2">
    <source>
    </source>
</evidence>
<evidence type="ECO:0000305" key="3"/>
<sequence length="228" mass="26088">MSSYFLNSTFPVTLPGGQESFLGQIPLYSSGYTDPLRHYPGAAYGGSSVQEKAYPSSFYQQANGAYSRATAAGPCDYATASFYREKDPACALASIEEHSFVLSQDHRKTDCTGSTGKSIYPEADEQKPSAPVYPWMQRMNSCNGTFGNAGRRGRQTYTRYQTLELEKEFHFNRYLTRRRRIEIAHALCLTERQIKIWFQNRRMKWKKENKLINCSQTSGEEEEEKRTE</sequence>
<accession>P15861</accession>
<accession>Q4PRA2</accession>
<accession>Q8AWY8</accession>
<name>HXB6A_DANRE</name>
<organism>
    <name type="scientific">Danio rerio</name>
    <name type="common">Zebrafish</name>
    <name type="synonym">Brachydanio rerio</name>
    <dbReference type="NCBI Taxonomy" id="7955"/>
    <lineage>
        <taxon>Eukaryota</taxon>
        <taxon>Metazoa</taxon>
        <taxon>Chordata</taxon>
        <taxon>Craniata</taxon>
        <taxon>Vertebrata</taxon>
        <taxon>Euteleostomi</taxon>
        <taxon>Actinopterygii</taxon>
        <taxon>Neopterygii</taxon>
        <taxon>Teleostei</taxon>
        <taxon>Ostariophysi</taxon>
        <taxon>Cypriniformes</taxon>
        <taxon>Danionidae</taxon>
        <taxon>Danioninae</taxon>
        <taxon>Danio</taxon>
    </lineage>
</organism>
<proteinExistence type="evidence at transcript level"/>
<protein>
    <recommendedName>
        <fullName>Homeobox protein Hox-B6a</fullName>
        <shortName>Hox-B6</shortName>
    </recommendedName>
    <alternativeName>
        <fullName>Homeobox protein Zf-22</fullName>
    </alternativeName>
</protein>
<reference key="1">
    <citation type="journal article" date="1990" name="EMBO J.">
        <title>The zebrafish homeobox gene hox-2.2: transcription unit, potential regulatory regions and in situ localization of transcripts.</title>
        <authorList>
            <person name="Njolstad P.R."/>
            <person name="Molven A."/>
            <person name="Apold J."/>
            <person name="Fjose A."/>
        </authorList>
    </citation>
    <scope>NUCLEOTIDE SEQUENCE [GENOMIC DNA]</scope>
    <source>
        <tissue>Embryo</tissue>
    </source>
</reference>
<reference key="2">
    <citation type="journal article" date="1993" name="Biochim. Biophys. Acta">
        <title>Sequence analysis of the zebrafish hox-B5/B6 region.</title>
        <authorList>
            <person name="Molven A."/>
            <person name="Hordvik I."/>
            <person name="Njolstad P.R."/>
        </authorList>
    </citation>
    <scope>NUCLEOTIDE SEQUENCE [GENOMIC DNA]</scope>
</reference>
<reference key="3">
    <citation type="journal article" date="2013" name="Nature">
        <title>The zebrafish reference genome sequence and its relationship to the human genome.</title>
        <authorList>
            <person name="Howe K."/>
            <person name="Clark M.D."/>
            <person name="Torroja C.F."/>
            <person name="Torrance J."/>
            <person name="Berthelot C."/>
            <person name="Muffato M."/>
            <person name="Collins J.E."/>
            <person name="Humphray S."/>
            <person name="McLaren K."/>
            <person name="Matthews L."/>
            <person name="McLaren S."/>
            <person name="Sealy I."/>
            <person name="Caccamo M."/>
            <person name="Churcher C."/>
            <person name="Scott C."/>
            <person name="Barrett J.C."/>
            <person name="Koch R."/>
            <person name="Rauch G.J."/>
            <person name="White S."/>
            <person name="Chow W."/>
            <person name="Kilian B."/>
            <person name="Quintais L.T."/>
            <person name="Guerra-Assuncao J.A."/>
            <person name="Zhou Y."/>
            <person name="Gu Y."/>
            <person name="Yen J."/>
            <person name="Vogel J.H."/>
            <person name="Eyre T."/>
            <person name="Redmond S."/>
            <person name="Banerjee R."/>
            <person name="Chi J."/>
            <person name="Fu B."/>
            <person name="Langley E."/>
            <person name="Maguire S.F."/>
            <person name="Laird G.K."/>
            <person name="Lloyd D."/>
            <person name="Kenyon E."/>
            <person name="Donaldson S."/>
            <person name="Sehra H."/>
            <person name="Almeida-King J."/>
            <person name="Loveland J."/>
            <person name="Trevanion S."/>
            <person name="Jones M."/>
            <person name="Quail M."/>
            <person name="Willey D."/>
            <person name="Hunt A."/>
            <person name="Burton J."/>
            <person name="Sims S."/>
            <person name="McLay K."/>
            <person name="Plumb B."/>
            <person name="Davis J."/>
            <person name="Clee C."/>
            <person name="Oliver K."/>
            <person name="Clark R."/>
            <person name="Riddle C."/>
            <person name="Elliot D."/>
            <person name="Threadgold G."/>
            <person name="Harden G."/>
            <person name="Ware D."/>
            <person name="Begum S."/>
            <person name="Mortimore B."/>
            <person name="Kerry G."/>
            <person name="Heath P."/>
            <person name="Phillimore B."/>
            <person name="Tracey A."/>
            <person name="Corby N."/>
            <person name="Dunn M."/>
            <person name="Johnson C."/>
            <person name="Wood J."/>
            <person name="Clark S."/>
            <person name="Pelan S."/>
            <person name="Griffiths G."/>
            <person name="Smith M."/>
            <person name="Glithero R."/>
            <person name="Howden P."/>
            <person name="Barker N."/>
            <person name="Lloyd C."/>
            <person name="Stevens C."/>
            <person name="Harley J."/>
            <person name="Holt K."/>
            <person name="Panagiotidis G."/>
            <person name="Lovell J."/>
            <person name="Beasley H."/>
            <person name="Henderson C."/>
            <person name="Gordon D."/>
            <person name="Auger K."/>
            <person name="Wright D."/>
            <person name="Collins J."/>
            <person name="Raisen C."/>
            <person name="Dyer L."/>
            <person name="Leung K."/>
            <person name="Robertson L."/>
            <person name="Ambridge K."/>
            <person name="Leongamornlert D."/>
            <person name="McGuire S."/>
            <person name="Gilderthorp R."/>
            <person name="Griffiths C."/>
            <person name="Manthravadi D."/>
            <person name="Nichol S."/>
            <person name="Barker G."/>
            <person name="Whitehead S."/>
            <person name="Kay M."/>
            <person name="Brown J."/>
            <person name="Murnane C."/>
            <person name="Gray E."/>
            <person name="Humphries M."/>
            <person name="Sycamore N."/>
            <person name="Barker D."/>
            <person name="Saunders D."/>
            <person name="Wallis J."/>
            <person name="Babbage A."/>
            <person name="Hammond S."/>
            <person name="Mashreghi-Mohammadi M."/>
            <person name="Barr L."/>
            <person name="Martin S."/>
            <person name="Wray P."/>
            <person name="Ellington A."/>
            <person name="Matthews N."/>
            <person name="Ellwood M."/>
            <person name="Woodmansey R."/>
            <person name="Clark G."/>
            <person name="Cooper J."/>
            <person name="Tromans A."/>
            <person name="Grafham D."/>
            <person name="Skuce C."/>
            <person name="Pandian R."/>
            <person name="Andrews R."/>
            <person name="Harrison E."/>
            <person name="Kimberley A."/>
            <person name="Garnett J."/>
            <person name="Fosker N."/>
            <person name="Hall R."/>
            <person name="Garner P."/>
            <person name="Kelly D."/>
            <person name="Bird C."/>
            <person name="Palmer S."/>
            <person name="Gehring I."/>
            <person name="Berger A."/>
            <person name="Dooley C.M."/>
            <person name="Ersan-Urun Z."/>
            <person name="Eser C."/>
            <person name="Geiger H."/>
            <person name="Geisler M."/>
            <person name="Karotki L."/>
            <person name="Kirn A."/>
            <person name="Konantz J."/>
            <person name="Konantz M."/>
            <person name="Oberlander M."/>
            <person name="Rudolph-Geiger S."/>
            <person name="Teucke M."/>
            <person name="Lanz C."/>
            <person name="Raddatz G."/>
            <person name="Osoegawa K."/>
            <person name="Zhu B."/>
            <person name="Rapp A."/>
            <person name="Widaa S."/>
            <person name="Langford C."/>
            <person name="Yang F."/>
            <person name="Schuster S.C."/>
            <person name="Carter N.P."/>
            <person name="Harrow J."/>
            <person name="Ning Z."/>
            <person name="Herrero J."/>
            <person name="Searle S.M."/>
            <person name="Enright A."/>
            <person name="Geisler R."/>
            <person name="Plasterk R.H."/>
            <person name="Lee C."/>
            <person name="Westerfield M."/>
            <person name="de Jong P.J."/>
            <person name="Zon L.I."/>
            <person name="Postlethwait J.H."/>
            <person name="Nusslein-Volhard C."/>
            <person name="Hubbard T.J."/>
            <person name="Roest Crollius H."/>
            <person name="Rogers J."/>
            <person name="Stemple D.L."/>
        </authorList>
    </citation>
    <scope>NUCLEOTIDE SEQUENCE [LARGE SCALE GENOMIC DNA]</scope>
    <source>
        <strain>Tuebingen</strain>
    </source>
</reference>
<reference key="4">
    <citation type="journal article" date="2005" name="Evol. Dev.">
        <title>Genomic annotation and transcriptome analysis of the zebrafish (Danio rerio) hox complex with description of a novel member, hoxb13a.</title>
        <authorList>
            <person name="Corredor-Adamez M."/>
            <person name="Welten M.C.M."/>
            <person name="Spaink H.P."/>
            <person name="Jeffery J.E."/>
            <person name="Schoon R.T."/>
            <person name="de Bakker M.A.G."/>
            <person name="Bagowski C.P."/>
            <person name="Meijer A.H."/>
            <person name="Verbeek F.J."/>
            <person name="Richardson M.K."/>
        </authorList>
    </citation>
    <scope>NUCLEOTIDE SEQUENCE [MRNA] OF 54-153</scope>
    <source>
        <strain>Tuebingen</strain>
    </source>
</reference>
<reference key="5">
    <citation type="journal article" date="1998" name="Development">
        <title>Zebrafish hox genes: genomic organization and modified colinear expression patterns in the trunk.</title>
        <authorList>
            <person name="Prince V.E."/>
            <person name="Joly L."/>
            <person name="Ekker M."/>
            <person name="Ho R.K."/>
        </authorList>
    </citation>
    <scope>DEVELOPMENTAL STAGE</scope>
</reference>
<comment type="function">
    <text>Sequence-specific transcription factor which is part of a developmental regulatory system that provides cells with specific positional identities on the anterior-posterior axis.</text>
</comment>
<comment type="subcellular location">
    <subcellularLocation>
        <location>Nucleus</location>
    </subcellularLocation>
</comment>
<comment type="developmental stage">
    <text evidence="2">At the 10-somite stage, expressed in the paraxial mesoderm with an anterior expression limit at somite 4. At the 20-somite stage, expressed in the developing CNS with an anterior expression limit adjacent to the somite 1/somite 2 boundary, and also expressed in the presumptive pronephric ducts.</text>
</comment>
<comment type="similarity">
    <text evidence="3">Belongs to the Antp homeobox family.</text>
</comment>